<keyword id="KW-0028">Amino-acid biosynthesis</keyword>
<keyword id="KW-0067">ATP-binding</keyword>
<keyword id="KW-0963">Cytoplasm</keyword>
<keyword id="KW-0418">Kinase</keyword>
<keyword id="KW-0547">Nucleotide-binding</keyword>
<keyword id="KW-0641">Proline biosynthesis</keyword>
<keyword id="KW-1185">Reference proteome</keyword>
<keyword id="KW-0808">Transferase</keyword>
<dbReference type="EC" id="2.7.2.11" evidence="1"/>
<dbReference type="EMBL" id="CP000304">
    <property type="protein sequence ID" value="ABP78656.1"/>
    <property type="molecule type" value="Genomic_DNA"/>
</dbReference>
<dbReference type="RefSeq" id="WP_011912148.1">
    <property type="nucleotide sequence ID" value="NC_009434.1"/>
</dbReference>
<dbReference type="SMR" id="A4VI55"/>
<dbReference type="GeneID" id="66820106"/>
<dbReference type="KEGG" id="psa:PST_0959"/>
<dbReference type="eggNOG" id="COG0263">
    <property type="taxonomic scope" value="Bacteria"/>
</dbReference>
<dbReference type="HOGENOM" id="CLU_025400_2_0_6"/>
<dbReference type="UniPathway" id="UPA00098">
    <property type="reaction ID" value="UER00359"/>
</dbReference>
<dbReference type="Proteomes" id="UP000000233">
    <property type="component" value="Chromosome"/>
</dbReference>
<dbReference type="GO" id="GO:0005829">
    <property type="term" value="C:cytosol"/>
    <property type="evidence" value="ECO:0007669"/>
    <property type="project" value="TreeGrafter"/>
</dbReference>
<dbReference type="GO" id="GO:0005524">
    <property type="term" value="F:ATP binding"/>
    <property type="evidence" value="ECO:0007669"/>
    <property type="project" value="UniProtKB-KW"/>
</dbReference>
<dbReference type="GO" id="GO:0004349">
    <property type="term" value="F:glutamate 5-kinase activity"/>
    <property type="evidence" value="ECO:0007669"/>
    <property type="project" value="UniProtKB-UniRule"/>
</dbReference>
<dbReference type="GO" id="GO:0003723">
    <property type="term" value="F:RNA binding"/>
    <property type="evidence" value="ECO:0007669"/>
    <property type="project" value="InterPro"/>
</dbReference>
<dbReference type="GO" id="GO:0055129">
    <property type="term" value="P:L-proline biosynthetic process"/>
    <property type="evidence" value="ECO:0007669"/>
    <property type="project" value="UniProtKB-UniRule"/>
</dbReference>
<dbReference type="CDD" id="cd04242">
    <property type="entry name" value="AAK_G5K_ProB"/>
    <property type="match status" value="1"/>
</dbReference>
<dbReference type="CDD" id="cd21157">
    <property type="entry name" value="PUA_G5K"/>
    <property type="match status" value="1"/>
</dbReference>
<dbReference type="FunFam" id="2.30.130.10:FF:000007">
    <property type="entry name" value="Glutamate 5-kinase"/>
    <property type="match status" value="1"/>
</dbReference>
<dbReference type="FunFam" id="3.40.1160.10:FF:000018">
    <property type="entry name" value="Glutamate 5-kinase"/>
    <property type="match status" value="1"/>
</dbReference>
<dbReference type="Gene3D" id="3.40.1160.10">
    <property type="entry name" value="Acetylglutamate kinase-like"/>
    <property type="match status" value="2"/>
</dbReference>
<dbReference type="Gene3D" id="2.30.130.10">
    <property type="entry name" value="PUA domain"/>
    <property type="match status" value="1"/>
</dbReference>
<dbReference type="HAMAP" id="MF_00456">
    <property type="entry name" value="ProB"/>
    <property type="match status" value="1"/>
</dbReference>
<dbReference type="InterPro" id="IPR036393">
    <property type="entry name" value="AceGlu_kinase-like_sf"/>
</dbReference>
<dbReference type="InterPro" id="IPR001048">
    <property type="entry name" value="Asp/Glu/Uridylate_kinase"/>
</dbReference>
<dbReference type="InterPro" id="IPR041739">
    <property type="entry name" value="G5K_ProB"/>
</dbReference>
<dbReference type="InterPro" id="IPR001057">
    <property type="entry name" value="Glu/AcGlu_kinase"/>
</dbReference>
<dbReference type="InterPro" id="IPR011529">
    <property type="entry name" value="Glu_5kinase"/>
</dbReference>
<dbReference type="InterPro" id="IPR005715">
    <property type="entry name" value="Glu_5kinase/COase_Synthase"/>
</dbReference>
<dbReference type="InterPro" id="IPR019797">
    <property type="entry name" value="Glutamate_5-kinase_CS"/>
</dbReference>
<dbReference type="InterPro" id="IPR002478">
    <property type="entry name" value="PUA"/>
</dbReference>
<dbReference type="InterPro" id="IPR015947">
    <property type="entry name" value="PUA-like_sf"/>
</dbReference>
<dbReference type="InterPro" id="IPR036974">
    <property type="entry name" value="PUA_sf"/>
</dbReference>
<dbReference type="NCBIfam" id="TIGR01027">
    <property type="entry name" value="proB"/>
    <property type="match status" value="1"/>
</dbReference>
<dbReference type="PANTHER" id="PTHR43654">
    <property type="entry name" value="GLUTAMATE 5-KINASE"/>
    <property type="match status" value="1"/>
</dbReference>
<dbReference type="PANTHER" id="PTHR43654:SF1">
    <property type="entry name" value="ISOPENTENYL PHOSPHATE KINASE"/>
    <property type="match status" value="1"/>
</dbReference>
<dbReference type="Pfam" id="PF00696">
    <property type="entry name" value="AA_kinase"/>
    <property type="match status" value="1"/>
</dbReference>
<dbReference type="Pfam" id="PF01472">
    <property type="entry name" value="PUA"/>
    <property type="match status" value="1"/>
</dbReference>
<dbReference type="PIRSF" id="PIRSF000729">
    <property type="entry name" value="GK"/>
    <property type="match status" value="1"/>
</dbReference>
<dbReference type="PRINTS" id="PR00474">
    <property type="entry name" value="GLU5KINASE"/>
</dbReference>
<dbReference type="SMART" id="SM00359">
    <property type="entry name" value="PUA"/>
    <property type="match status" value="1"/>
</dbReference>
<dbReference type="SUPFAM" id="SSF53633">
    <property type="entry name" value="Carbamate kinase-like"/>
    <property type="match status" value="1"/>
</dbReference>
<dbReference type="SUPFAM" id="SSF88697">
    <property type="entry name" value="PUA domain-like"/>
    <property type="match status" value="1"/>
</dbReference>
<dbReference type="PROSITE" id="PS00902">
    <property type="entry name" value="GLUTAMATE_5_KINASE"/>
    <property type="match status" value="1"/>
</dbReference>
<dbReference type="PROSITE" id="PS50890">
    <property type="entry name" value="PUA"/>
    <property type="match status" value="1"/>
</dbReference>
<protein>
    <recommendedName>
        <fullName evidence="1">Glutamate 5-kinase</fullName>
        <ecNumber evidence="1">2.7.2.11</ecNumber>
    </recommendedName>
    <alternativeName>
        <fullName evidence="1">Gamma-glutamyl kinase</fullName>
        <shortName evidence="1">GK</shortName>
    </alternativeName>
</protein>
<comment type="function">
    <text evidence="1">Catalyzes the transfer of a phosphate group to glutamate to form L-glutamate 5-phosphate.</text>
</comment>
<comment type="catalytic activity">
    <reaction evidence="1">
        <text>L-glutamate + ATP = L-glutamyl 5-phosphate + ADP</text>
        <dbReference type="Rhea" id="RHEA:14877"/>
        <dbReference type="ChEBI" id="CHEBI:29985"/>
        <dbReference type="ChEBI" id="CHEBI:30616"/>
        <dbReference type="ChEBI" id="CHEBI:58274"/>
        <dbReference type="ChEBI" id="CHEBI:456216"/>
        <dbReference type="EC" id="2.7.2.11"/>
    </reaction>
</comment>
<comment type="pathway">
    <text evidence="1">Amino-acid biosynthesis; L-proline biosynthesis; L-glutamate 5-semialdehyde from L-glutamate: step 1/2.</text>
</comment>
<comment type="subcellular location">
    <subcellularLocation>
        <location evidence="1">Cytoplasm</location>
    </subcellularLocation>
</comment>
<comment type="similarity">
    <text evidence="1">Belongs to the glutamate 5-kinase family.</text>
</comment>
<feature type="chain" id="PRO_1000081097" description="Glutamate 5-kinase">
    <location>
        <begin position="1"/>
        <end position="372"/>
    </location>
</feature>
<feature type="domain" description="PUA" evidence="1">
    <location>
        <begin position="280"/>
        <end position="358"/>
    </location>
</feature>
<feature type="binding site" evidence="1">
    <location>
        <position position="14"/>
    </location>
    <ligand>
        <name>ATP</name>
        <dbReference type="ChEBI" id="CHEBI:30616"/>
    </ligand>
</feature>
<feature type="binding site" evidence="1">
    <location>
        <position position="54"/>
    </location>
    <ligand>
        <name>substrate</name>
    </ligand>
</feature>
<feature type="binding site" evidence="1">
    <location>
        <position position="141"/>
    </location>
    <ligand>
        <name>substrate</name>
    </ligand>
</feature>
<feature type="binding site" evidence="1">
    <location>
        <position position="153"/>
    </location>
    <ligand>
        <name>substrate</name>
    </ligand>
</feature>
<feature type="binding site" evidence="1">
    <location>
        <begin position="173"/>
        <end position="174"/>
    </location>
    <ligand>
        <name>ATP</name>
        <dbReference type="ChEBI" id="CHEBI:30616"/>
    </ligand>
</feature>
<accession>A4VI55</accession>
<sequence>MRDKVSGARRWVVKIGSALLTADGRGLDQAAMAVWVDQMVALRAAGVELVLVSSGAVAAGMSRLGWASRPKAVHELQAAAAVGQMGLIRAWESSFARCDQQTAQILVTHDDLSDRKRYLNARSTLRTLIDLGVVPVINENDTVVTDEIRFGDNDTLAALVANLVEADLLVILTDRDGMFDADPRHNPEANLISEARADDPALDAVAGGTGGALGRGGMQTKLRAARLAARSGAHTVIVGGRIEQVLSRLKAGERLGTLLAPECNRHAARKQWLAGHLQTRGTLTLDEGAVLALRQGNRSLLPVGVRAVQGAFRRGEMVVCVGPQGAEVARGLVNYSAAEAQRILGRPSDEIEKLLGYVDEPELIHRDNMILV</sequence>
<gene>
    <name evidence="1" type="primary">proB</name>
    <name type="ordered locus">PST_0959</name>
</gene>
<evidence type="ECO:0000255" key="1">
    <source>
        <dbReference type="HAMAP-Rule" id="MF_00456"/>
    </source>
</evidence>
<name>PROB_STUS1</name>
<reference key="1">
    <citation type="journal article" date="2008" name="Proc. Natl. Acad. Sci. U.S.A.">
        <title>Nitrogen fixation island and rhizosphere competence traits in the genome of root-associated Pseudomonas stutzeri A1501.</title>
        <authorList>
            <person name="Yan Y."/>
            <person name="Yang J."/>
            <person name="Dou Y."/>
            <person name="Chen M."/>
            <person name="Ping S."/>
            <person name="Peng J."/>
            <person name="Lu W."/>
            <person name="Zhang W."/>
            <person name="Yao Z."/>
            <person name="Li H."/>
            <person name="Liu W."/>
            <person name="He S."/>
            <person name="Geng L."/>
            <person name="Zhang X."/>
            <person name="Yang F."/>
            <person name="Yu H."/>
            <person name="Zhan Y."/>
            <person name="Li D."/>
            <person name="Lin Z."/>
            <person name="Wang Y."/>
            <person name="Elmerich C."/>
            <person name="Lin M."/>
            <person name="Jin Q."/>
        </authorList>
    </citation>
    <scope>NUCLEOTIDE SEQUENCE [LARGE SCALE GENOMIC DNA]</scope>
    <source>
        <strain>A1501</strain>
    </source>
</reference>
<proteinExistence type="inferred from homology"/>
<organism>
    <name type="scientific">Stutzerimonas stutzeri (strain A1501)</name>
    <name type="common">Pseudomonas stutzeri</name>
    <dbReference type="NCBI Taxonomy" id="379731"/>
    <lineage>
        <taxon>Bacteria</taxon>
        <taxon>Pseudomonadati</taxon>
        <taxon>Pseudomonadota</taxon>
        <taxon>Gammaproteobacteria</taxon>
        <taxon>Pseudomonadales</taxon>
        <taxon>Pseudomonadaceae</taxon>
        <taxon>Stutzerimonas</taxon>
    </lineage>
</organism>